<accession>Q9BSH4</accession>
<accession>B2RD21</accession>
<accession>Q8N3N6</accession>
<accession>Q9UI60</accession>
<protein>
    <recommendedName>
        <fullName>Translational activator of cytochrome c oxidase 1</fullName>
    </recommendedName>
    <alternativeName>
        <fullName>Coiled-coil domain-containing protein 44</fullName>
    </alternativeName>
    <alternativeName>
        <fullName>Translational activator of mitochondrially-encoded cytochrome c oxidase I</fullName>
    </alternativeName>
</protein>
<proteinExistence type="evidence at protein level"/>
<organism>
    <name type="scientific">Homo sapiens</name>
    <name type="common">Human</name>
    <dbReference type="NCBI Taxonomy" id="9606"/>
    <lineage>
        <taxon>Eukaryota</taxon>
        <taxon>Metazoa</taxon>
        <taxon>Chordata</taxon>
        <taxon>Craniata</taxon>
        <taxon>Vertebrata</taxon>
        <taxon>Euteleostomi</taxon>
        <taxon>Mammalia</taxon>
        <taxon>Eutheria</taxon>
        <taxon>Euarchontoglires</taxon>
        <taxon>Primates</taxon>
        <taxon>Haplorrhini</taxon>
        <taxon>Catarrhini</taxon>
        <taxon>Hominidae</taxon>
        <taxon>Homo</taxon>
    </lineage>
</organism>
<evidence type="ECO:0000255" key="1"/>
<evidence type="ECO:0000256" key="2">
    <source>
        <dbReference type="SAM" id="MobiDB-lite"/>
    </source>
</evidence>
<evidence type="ECO:0000269" key="3">
    <source>
    </source>
</evidence>
<evidence type="ECO:0000305" key="4"/>
<keyword id="KW-0010">Activator</keyword>
<keyword id="KW-0175">Coiled coil</keyword>
<keyword id="KW-0431">Leigh syndrome</keyword>
<keyword id="KW-0496">Mitochondrion</keyword>
<keyword id="KW-1274">Primary mitochondrial disease</keyword>
<keyword id="KW-1267">Proteomics identification</keyword>
<keyword id="KW-1185">Reference proteome</keyword>
<keyword id="KW-0810">Translation regulation</keyword>
<name>TACO1_HUMAN</name>
<dbReference type="EMBL" id="AK315375">
    <property type="protein sequence ID" value="BAG37768.1"/>
    <property type="molecule type" value="mRNA"/>
</dbReference>
<dbReference type="EMBL" id="CH471109">
    <property type="protein sequence ID" value="EAW94304.1"/>
    <property type="molecule type" value="Genomic_DNA"/>
</dbReference>
<dbReference type="EMBL" id="BC005049">
    <property type="protein sequence ID" value="AAH05049.1"/>
    <property type="molecule type" value="mRNA"/>
</dbReference>
<dbReference type="EMBL" id="BC007744">
    <property type="protein sequence ID" value="AAH07744.1"/>
    <property type="molecule type" value="mRNA"/>
</dbReference>
<dbReference type="EMBL" id="AL833861">
    <property type="protein sequence ID" value="CAD38719.1"/>
    <property type="molecule type" value="mRNA"/>
</dbReference>
<dbReference type="EMBL" id="AF090929">
    <property type="protein sequence ID" value="AAF24044.1"/>
    <property type="molecule type" value="mRNA"/>
</dbReference>
<dbReference type="CCDS" id="CCDS11640.1"/>
<dbReference type="RefSeq" id="NP_057444.2">
    <property type="nucleotide sequence ID" value="NM_016360.3"/>
</dbReference>
<dbReference type="SMR" id="Q9BSH4"/>
<dbReference type="BioGRID" id="119377">
    <property type="interactions" value="340"/>
</dbReference>
<dbReference type="FunCoup" id="Q9BSH4">
    <property type="interactions" value="906"/>
</dbReference>
<dbReference type="IntAct" id="Q9BSH4">
    <property type="interactions" value="40"/>
</dbReference>
<dbReference type="MINT" id="Q9BSH4"/>
<dbReference type="STRING" id="9606.ENSP00000258975"/>
<dbReference type="GlyGen" id="Q9BSH4">
    <property type="glycosylation" value="1 site, 1 O-linked glycan (1 site)"/>
</dbReference>
<dbReference type="iPTMnet" id="Q9BSH4"/>
<dbReference type="PhosphoSitePlus" id="Q9BSH4"/>
<dbReference type="SwissPalm" id="Q9BSH4"/>
<dbReference type="BioMuta" id="TACO1"/>
<dbReference type="DMDM" id="33516968"/>
<dbReference type="jPOST" id="Q9BSH4"/>
<dbReference type="MassIVE" id="Q9BSH4"/>
<dbReference type="PaxDb" id="9606-ENSP00000258975"/>
<dbReference type="PeptideAtlas" id="Q9BSH4"/>
<dbReference type="ProteomicsDB" id="78893"/>
<dbReference type="Pumba" id="Q9BSH4"/>
<dbReference type="Antibodypedia" id="18674">
    <property type="antibodies" value="175 antibodies from 27 providers"/>
</dbReference>
<dbReference type="DNASU" id="51204"/>
<dbReference type="Ensembl" id="ENST00000258975.7">
    <property type="protein sequence ID" value="ENSP00000258975.6"/>
    <property type="gene ID" value="ENSG00000136463.9"/>
</dbReference>
<dbReference type="GeneID" id="51204"/>
<dbReference type="KEGG" id="hsa:51204"/>
<dbReference type="MANE-Select" id="ENST00000258975.7">
    <property type="protein sequence ID" value="ENSP00000258975.6"/>
    <property type="RefSeq nucleotide sequence ID" value="NM_016360.4"/>
    <property type="RefSeq protein sequence ID" value="NP_057444.2"/>
</dbReference>
<dbReference type="UCSC" id="uc002jbd.3">
    <property type="organism name" value="human"/>
</dbReference>
<dbReference type="AGR" id="HGNC:24316"/>
<dbReference type="CTD" id="51204"/>
<dbReference type="DisGeNET" id="51204"/>
<dbReference type="GeneCards" id="TACO1"/>
<dbReference type="HGNC" id="HGNC:24316">
    <property type="gene designation" value="TACO1"/>
</dbReference>
<dbReference type="HPA" id="ENSG00000136463">
    <property type="expression patterns" value="Tissue enhanced (liver)"/>
</dbReference>
<dbReference type="MalaCards" id="TACO1"/>
<dbReference type="MIM" id="612958">
    <property type="type" value="gene"/>
</dbReference>
<dbReference type="MIM" id="619052">
    <property type="type" value="phenotype"/>
</dbReference>
<dbReference type="neXtProt" id="NX_Q9BSH4"/>
<dbReference type="OpenTargets" id="ENSG00000136463"/>
<dbReference type="PharmGKB" id="PA165433031"/>
<dbReference type="VEuPathDB" id="HostDB:ENSG00000136463"/>
<dbReference type="eggNOG" id="KOG2972">
    <property type="taxonomic scope" value="Eukaryota"/>
</dbReference>
<dbReference type="GeneTree" id="ENSGT00390000012820"/>
<dbReference type="HOGENOM" id="CLU_062974_3_0_1"/>
<dbReference type="InParanoid" id="Q9BSH4"/>
<dbReference type="OMA" id="NFDIPDE"/>
<dbReference type="OrthoDB" id="2017544at2759"/>
<dbReference type="PAN-GO" id="Q9BSH4">
    <property type="GO annotations" value="1 GO annotation based on evolutionary models"/>
</dbReference>
<dbReference type="PhylomeDB" id="Q9BSH4"/>
<dbReference type="TreeFam" id="TF300070"/>
<dbReference type="PathwayCommons" id="Q9BSH4"/>
<dbReference type="Reactome" id="R-HSA-9864848">
    <property type="pathway name" value="Complex IV assembly"/>
</dbReference>
<dbReference type="SignaLink" id="Q9BSH4"/>
<dbReference type="BioGRID-ORCS" id="51204">
    <property type="hits" value="15 hits in 1156 CRISPR screens"/>
</dbReference>
<dbReference type="ChiTaRS" id="TACO1">
    <property type="organism name" value="human"/>
</dbReference>
<dbReference type="GenomeRNAi" id="51204"/>
<dbReference type="Pharos" id="Q9BSH4">
    <property type="development level" value="Tbio"/>
</dbReference>
<dbReference type="PRO" id="PR:Q9BSH4"/>
<dbReference type="Proteomes" id="UP000005640">
    <property type="component" value="Chromosome 17"/>
</dbReference>
<dbReference type="RNAct" id="Q9BSH4">
    <property type="molecule type" value="protein"/>
</dbReference>
<dbReference type="Bgee" id="ENSG00000136463">
    <property type="expression patterns" value="Expressed in apex of heart and 190 other cell types or tissues"/>
</dbReference>
<dbReference type="GO" id="GO:0005739">
    <property type="term" value="C:mitochondrion"/>
    <property type="evidence" value="ECO:0000314"/>
    <property type="project" value="HPA"/>
</dbReference>
<dbReference type="GO" id="GO:0097177">
    <property type="term" value="F:mitochondrial ribosome binding"/>
    <property type="evidence" value="ECO:0007669"/>
    <property type="project" value="Ensembl"/>
</dbReference>
<dbReference type="GO" id="GO:0003729">
    <property type="term" value="F:mRNA binding"/>
    <property type="evidence" value="ECO:0007669"/>
    <property type="project" value="Ensembl"/>
</dbReference>
<dbReference type="GO" id="GO:0019843">
    <property type="term" value="F:rRNA binding"/>
    <property type="evidence" value="ECO:0007669"/>
    <property type="project" value="Ensembl"/>
</dbReference>
<dbReference type="GO" id="GO:0033617">
    <property type="term" value="P:mitochondrial cytochrome c oxidase assembly"/>
    <property type="evidence" value="ECO:0007669"/>
    <property type="project" value="Ensembl"/>
</dbReference>
<dbReference type="GO" id="GO:0061743">
    <property type="term" value="P:motor learning"/>
    <property type="evidence" value="ECO:0007669"/>
    <property type="project" value="Ensembl"/>
</dbReference>
<dbReference type="GO" id="GO:0070129">
    <property type="term" value="P:regulation of mitochondrial translation"/>
    <property type="evidence" value="ECO:0007669"/>
    <property type="project" value="Ensembl"/>
</dbReference>
<dbReference type="FunFam" id="1.10.10.200:FF:000002">
    <property type="entry name" value="Probable transcriptional regulatory protein CLM62_37755"/>
    <property type="match status" value="1"/>
</dbReference>
<dbReference type="FunFam" id="3.30.70.980:FF:000008">
    <property type="entry name" value="Translational activator of cytochrome c oxidase 1"/>
    <property type="match status" value="1"/>
</dbReference>
<dbReference type="Gene3D" id="1.10.10.200">
    <property type="match status" value="1"/>
</dbReference>
<dbReference type="Gene3D" id="3.30.70.980">
    <property type="match status" value="2"/>
</dbReference>
<dbReference type="HAMAP" id="MF_00693">
    <property type="entry name" value="Transcrip_reg_TACO1"/>
    <property type="match status" value="1"/>
</dbReference>
<dbReference type="InterPro" id="IPR017856">
    <property type="entry name" value="Integrase-like_N"/>
</dbReference>
<dbReference type="InterPro" id="IPR048300">
    <property type="entry name" value="TACO1_YebC-like_2nd/3rd_dom"/>
</dbReference>
<dbReference type="InterPro" id="IPR049083">
    <property type="entry name" value="TACO1_YebC_N"/>
</dbReference>
<dbReference type="InterPro" id="IPR002876">
    <property type="entry name" value="Transcrip_reg_TACO1-like"/>
</dbReference>
<dbReference type="InterPro" id="IPR026564">
    <property type="entry name" value="Transcrip_reg_TACO1-like_dom3"/>
</dbReference>
<dbReference type="InterPro" id="IPR029072">
    <property type="entry name" value="YebC-like"/>
</dbReference>
<dbReference type="PANTHER" id="PTHR12532">
    <property type="entry name" value="TRANSLATIONAL ACTIVATOR OF CYTOCHROME C OXIDASE 1"/>
    <property type="match status" value="1"/>
</dbReference>
<dbReference type="PANTHER" id="PTHR12532:SF0">
    <property type="entry name" value="TRANSLATIONAL ACTIVATOR OF CYTOCHROME C OXIDASE 1"/>
    <property type="match status" value="1"/>
</dbReference>
<dbReference type="Pfam" id="PF20772">
    <property type="entry name" value="TACO1_YebC_N"/>
    <property type="match status" value="1"/>
</dbReference>
<dbReference type="Pfam" id="PF01709">
    <property type="entry name" value="Transcrip_reg"/>
    <property type="match status" value="1"/>
</dbReference>
<dbReference type="SUPFAM" id="SSF75625">
    <property type="entry name" value="YebC-like"/>
    <property type="match status" value="1"/>
</dbReference>
<gene>
    <name type="primary">TACO1</name>
    <name type="synonym">CCDC44</name>
    <name type="ORF">PRO0477</name>
</gene>
<reference key="1">
    <citation type="journal article" date="2004" name="Nat. Genet.">
        <title>Complete sequencing and characterization of 21,243 full-length human cDNAs.</title>
        <authorList>
            <person name="Ota T."/>
            <person name="Suzuki Y."/>
            <person name="Nishikawa T."/>
            <person name="Otsuki T."/>
            <person name="Sugiyama T."/>
            <person name="Irie R."/>
            <person name="Wakamatsu A."/>
            <person name="Hayashi K."/>
            <person name="Sato H."/>
            <person name="Nagai K."/>
            <person name="Kimura K."/>
            <person name="Makita H."/>
            <person name="Sekine M."/>
            <person name="Obayashi M."/>
            <person name="Nishi T."/>
            <person name="Shibahara T."/>
            <person name="Tanaka T."/>
            <person name="Ishii S."/>
            <person name="Yamamoto J."/>
            <person name="Saito K."/>
            <person name="Kawai Y."/>
            <person name="Isono Y."/>
            <person name="Nakamura Y."/>
            <person name="Nagahari K."/>
            <person name="Murakami K."/>
            <person name="Yasuda T."/>
            <person name="Iwayanagi T."/>
            <person name="Wagatsuma M."/>
            <person name="Shiratori A."/>
            <person name="Sudo H."/>
            <person name="Hosoiri T."/>
            <person name="Kaku Y."/>
            <person name="Kodaira H."/>
            <person name="Kondo H."/>
            <person name="Sugawara M."/>
            <person name="Takahashi M."/>
            <person name="Kanda K."/>
            <person name="Yokoi T."/>
            <person name="Furuya T."/>
            <person name="Kikkawa E."/>
            <person name="Omura Y."/>
            <person name="Abe K."/>
            <person name="Kamihara K."/>
            <person name="Katsuta N."/>
            <person name="Sato K."/>
            <person name="Tanikawa M."/>
            <person name="Yamazaki M."/>
            <person name="Ninomiya K."/>
            <person name="Ishibashi T."/>
            <person name="Yamashita H."/>
            <person name="Murakawa K."/>
            <person name="Fujimori K."/>
            <person name="Tanai H."/>
            <person name="Kimata M."/>
            <person name="Watanabe M."/>
            <person name="Hiraoka S."/>
            <person name="Chiba Y."/>
            <person name="Ishida S."/>
            <person name="Ono Y."/>
            <person name="Takiguchi S."/>
            <person name="Watanabe S."/>
            <person name="Yosida M."/>
            <person name="Hotuta T."/>
            <person name="Kusano J."/>
            <person name="Kanehori K."/>
            <person name="Takahashi-Fujii A."/>
            <person name="Hara H."/>
            <person name="Tanase T.-O."/>
            <person name="Nomura Y."/>
            <person name="Togiya S."/>
            <person name="Komai F."/>
            <person name="Hara R."/>
            <person name="Takeuchi K."/>
            <person name="Arita M."/>
            <person name="Imose N."/>
            <person name="Musashino K."/>
            <person name="Yuuki H."/>
            <person name="Oshima A."/>
            <person name="Sasaki N."/>
            <person name="Aotsuka S."/>
            <person name="Yoshikawa Y."/>
            <person name="Matsunawa H."/>
            <person name="Ichihara T."/>
            <person name="Shiohata N."/>
            <person name="Sano S."/>
            <person name="Moriya S."/>
            <person name="Momiyama H."/>
            <person name="Satoh N."/>
            <person name="Takami S."/>
            <person name="Terashima Y."/>
            <person name="Suzuki O."/>
            <person name="Nakagawa S."/>
            <person name="Senoh A."/>
            <person name="Mizoguchi H."/>
            <person name="Goto Y."/>
            <person name="Shimizu F."/>
            <person name="Wakebe H."/>
            <person name="Hishigaki H."/>
            <person name="Watanabe T."/>
            <person name="Sugiyama A."/>
            <person name="Takemoto M."/>
            <person name="Kawakami B."/>
            <person name="Yamazaki M."/>
            <person name="Watanabe K."/>
            <person name="Kumagai A."/>
            <person name="Itakura S."/>
            <person name="Fukuzumi Y."/>
            <person name="Fujimori Y."/>
            <person name="Komiyama M."/>
            <person name="Tashiro H."/>
            <person name="Tanigami A."/>
            <person name="Fujiwara T."/>
            <person name="Ono T."/>
            <person name="Yamada K."/>
            <person name="Fujii Y."/>
            <person name="Ozaki K."/>
            <person name="Hirao M."/>
            <person name="Ohmori Y."/>
            <person name="Kawabata A."/>
            <person name="Hikiji T."/>
            <person name="Kobatake N."/>
            <person name="Inagaki H."/>
            <person name="Ikema Y."/>
            <person name="Okamoto S."/>
            <person name="Okitani R."/>
            <person name="Kawakami T."/>
            <person name="Noguchi S."/>
            <person name="Itoh T."/>
            <person name="Shigeta K."/>
            <person name="Senba T."/>
            <person name="Matsumura K."/>
            <person name="Nakajima Y."/>
            <person name="Mizuno T."/>
            <person name="Morinaga M."/>
            <person name="Sasaki M."/>
            <person name="Togashi T."/>
            <person name="Oyama M."/>
            <person name="Hata H."/>
            <person name="Watanabe M."/>
            <person name="Komatsu T."/>
            <person name="Mizushima-Sugano J."/>
            <person name="Satoh T."/>
            <person name="Shirai Y."/>
            <person name="Takahashi Y."/>
            <person name="Nakagawa K."/>
            <person name="Okumura K."/>
            <person name="Nagase T."/>
            <person name="Nomura N."/>
            <person name="Kikuchi H."/>
            <person name="Masuho Y."/>
            <person name="Yamashita R."/>
            <person name="Nakai K."/>
            <person name="Yada T."/>
            <person name="Nakamura Y."/>
            <person name="Ohara O."/>
            <person name="Isogai T."/>
            <person name="Sugano S."/>
        </authorList>
    </citation>
    <scope>NUCLEOTIDE SEQUENCE [LARGE SCALE MRNA]</scope>
    <source>
        <tissue>Amygdala</tissue>
    </source>
</reference>
<reference key="2">
    <citation type="submission" date="2005-09" db="EMBL/GenBank/DDBJ databases">
        <authorList>
            <person name="Mural R.J."/>
            <person name="Istrail S."/>
            <person name="Sutton G.G."/>
            <person name="Florea L."/>
            <person name="Halpern A.L."/>
            <person name="Mobarry C.M."/>
            <person name="Lippert R."/>
            <person name="Walenz B."/>
            <person name="Shatkay H."/>
            <person name="Dew I."/>
            <person name="Miller J.R."/>
            <person name="Flanigan M.J."/>
            <person name="Edwards N.J."/>
            <person name="Bolanos R."/>
            <person name="Fasulo D."/>
            <person name="Halldorsson B.V."/>
            <person name="Hannenhalli S."/>
            <person name="Turner R."/>
            <person name="Yooseph S."/>
            <person name="Lu F."/>
            <person name="Nusskern D.R."/>
            <person name="Shue B.C."/>
            <person name="Zheng X.H."/>
            <person name="Zhong F."/>
            <person name="Delcher A.L."/>
            <person name="Huson D.H."/>
            <person name="Kravitz S.A."/>
            <person name="Mouchard L."/>
            <person name="Reinert K."/>
            <person name="Remington K.A."/>
            <person name="Clark A.G."/>
            <person name="Waterman M.S."/>
            <person name="Eichler E.E."/>
            <person name="Adams M.D."/>
            <person name="Hunkapiller M.W."/>
            <person name="Myers E.W."/>
            <person name="Venter J.C."/>
        </authorList>
    </citation>
    <scope>NUCLEOTIDE SEQUENCE [LARGE SCALE GENOMIC DNA]</scope>
</reference>
<reference key="3">
    <citation type="journal article" date="2004" name="Genome Res.">
        <title>The status, quality, and expansion of the NIH full-length cDNA project: the Mammalian Gene Collection (MGC).</title>
        <authorList>
            <consortium name="The MGC Project Team"/>
        </authorList>
    </citation>
    <scope>NUCLEOTIDE SEQUENCE [LARGE SCALE MRNA]</scope>
    <source>
        <tissue>Brain</tissue>
        <tissue>Placenta</tissue>
    </source>
</reference>
<reference key="4">
    <citation type="journal article" date="2007" name="BMC Genomics">
        <title>The full-ORF clone resource of the German cDNA consortium.</title>
        <authorList>
            <person name="Bechtel S."/>
            <person name="Rosenfelder H."/>
            <person name="Duda A."/>
            <person name="Schmidt C.P."/>
            <person name="Ernst U."/>
            <person name="Wellenreuther R."/>
            <person name="Mehrle A."/>
            <person name="Schuster C."/>
            <person name="Bahr A."/>
            <person name="Bloecker H."/>
            <person name="Heubner D."/>
            <person name="Hoerlein A."/>
            <person name="Michel G."/>
            <person name="Wedler H."/>
            <person name="Koehrer K."/>
            <person name="Ottenwaelder B."/>
            <person name="Poustka A."/>
            <person name="Wiemann S."/>
            <person name="Schupp I."/>
        </authorList>
    </citation>
    <scope>NUCLEOTIDE SEQUENCE [LARGE SCALE MRNA] OF 126-297</scope>
    <source>
        <tissue>Melanoma</tissue>
    </source>
</reference>
<reference key="5">
    <citation type="submission" date="1998-09" db="EMBL/GenBank/DDBJ databases">
        <title>Functional prediction of the coding sequences of 50 new genes deduced by analysis of cDNA clones from human fetal liver.</title>
        <authorList>
            <person name="Yu Y."/>
            <person name="Zhang C."/>
            <person name="Luo L."/>
            <person name="Ouyang S."/>
            <person name="Zhang S."/>
            <person name="Li W."/>
            <person name="Wu J."/>
            <person name="Zhou S."/>
            <person name="Liu M."/>
            <person name="He F."/>
        </authorList>
    </citation>
    <scope>NUCLEOTIDE SEQUENCE [LARGE SCALE MRNA] OF 168-297</scope>
    <source>
        <tissue>Fetal liver</tissue>
    </source>
</reference>
<reference key="6">
    <citation type="journal article" date="2009" name="Nat. Genet.">
        <title>Mutation in TACO1, encoding a translational activator of COX I, results in cytochrome c oxidase deficiency and late-onset Leigh syndrome.</title>
        <authorList>
            <person name="Weraarpachai W."/>
            <person name="Antonicka H."/>
            <person name="Sasarman F."/>
            <person name="Seeger J."/>
            <person name="Schrank B."/>
            <person name="Kolesar J.E."/>
            <person name="Lochmueller H."/>
            <person name="Chevrette M."/>
            <person name="Kaufman B.A."/>
            <person name="Horvath R."/>
            <person name="Shoubridge E.A."/>
        </authorList>
    </citation>
    <scope>FUNCTION</scope>
    <scope>SUBCELLULAR LOCATION</scope>
    <scope>INVOLVEMENT IN MC4DN8</scope>
</reference>
<reference key="7">
    <citation type="journal article" date="2011" name="BMC Syst. Biol.">
        <title>Initial characterization of the human central proteome.</title>
        <authorList>
            <person name="Burkard T.R."/>
            <person name="Planyavsky M."/>
            <person name="Kaupe I."/>
            <person name="Breitwieser F.P."/>
            <person name="Buerckstuemmer T."/>
            <person name="Bennett K.L."/>
            <person name="Superti-Furga G."/>
            <person name="Colinge J."/>
        </authorList>
    </citation>
    <scope>IDENTIFICATION BY MASS SPECTROMETRY [LARGE SCALE ANALYSIS]</scope>
</reference>
<reference key="8">
    <citation type="journal article" date="2014" name="J. Proteomics">
        <title>An enzyme assisted RP-RPLC approach for in-depth analysis of human liver phosphoproteome.</title>
        <authorList>
            <person name="Bian Y."/>
            <person name="Song C."/>
            <person name="Cheng K."/>
            <person name="Dong M."/>
            <person name="Wang F."/>
            <person name="Huang J."/>
            <person name="Sun D."/>
            <person name="Wang L."/>
            <person name="Ye M."/>
            <person name="Zou H."/>
        </authorList>
    </citation>
    <scope>IDENTIFICATION BY MASS SPECTROMETRY [LARGE SCALE ANALYSIS]</scope>
    <source>
        <tissue>Liver</tissue>
    </source>
</reference>
<reference key="9">
    <citation type="journal article" date="2015" name="Proteomics">
        <title>N-terminome analysis of the human mitochondrial proteome.</title>
        <authorList>
            <person name="Vaca Jacome A.S."/>
            <person name="Rabilloud T."/>
            <person name="Schaeffer-Reiss C."/>
            <person name="Rompais M."/>
            <person name="Ayoub D."/>
            <person name="Lane L."/>
            <person name="Bairoch A."/>
            <person name="Van Dorsselaer A."/>
            <person name="Carapito C."/>
        </authorList>
    </citation>
    <scope>IDENTIFICATION BY MASS SPECTROMETRY [LARGE SCALE ANALYSIS]</scope>
</reference>
<sequence length="297" mass="32477">MSAWAAASLSRAAARCLLARGPGVRAAPPRDPRPSHPEPRGCGAAPGRTLHFTAAVPAGHNKWSKVRHIKGPKDVERSRIFSKLCLNIRLAVKEGGPNPEHNSNLANILEVCRSKHMPKSTIETALKMEKSKDTYLLYEGRGPGGSSLLIEALSNSSHKCQADIRHILNKNGGVMAVGARHSFDKKGVIVVEVEDREKKAVNLERALEMAIEAGAEDVKETEDEEERNVFKFICDASSLHQVRKKLDSLGLCSVSCALEFIPNSKVQLAEPDLEQAAHLIQALSNHEDVIHVYDNIE</sequence>
<comment type="function">
    <text evidence="3">Acts as a translational activator of mitochondrially-encoded cytochrome c oxidase 1.</text>
</comment>
<comment type="interaction">
    <interactant intactId="EBI-747797">
        <id>Q9BSH4</id>
    </interactant>
    <interactant intactId="EBI-739580">
        <id>Q13137</id>
        <label>CALCOCO2</label>
    </interactant>
    <organismsDiffer>false</organismsDiffer>
    <experiments>3</experiments>
</comment>
<comment type="interaction">
    <interactant intactId="EBI-747797">
        <id>Q9BSH4</id>
    </interactant>
    <interactant intactId="EBI-12868028">
        <id>A0PJX0</id>
        <label>CIB4</label>
    </interactant>
    <organismsDiffer>false</organismsDiffer>
    <experiments>3</experiments>
</comment>
<comment type="interaction">
    <interactant intactId="EBI-747797">
        <id>Q9BSH4</id>
    </interactant>
    <interactant intactId="EBI-750300">
        <id>Q01658</id>
        <label>DR1</label>
    </interactant>
    <organismsDiffer>false</organismsDiffer>
    <experiments>3</experiments>
</comment>
<comment type="interaction">
    <interactant intactId="EBI-747797">
        <id>Q9BSH4</id>
    </interactant>
    <interactant intactId="EBI-5916454">
        <id>A6NEM1</id>
        <label>GOLGA6L9</label>
    </interactant>
    <organismsDiffer>false</organismsDiffer>
    <experiments>3</experiments>
</comment>
<comment type="interaction">
    <interactant intactId="EBI-747797">
        <id>Q9BSH4</id>
    </interactant>
    <interactant intactId="EBI-1054873">
        <id>Q9Y5Q9</id>
        <label>GTF3C3</label>
    </interactant>
    <organismsDiffer>false</organismsDiffer>
    <experiments>3</experiments>
</comment>
<comment type="interaction">
    <interactant intactId="EBI-747797">
        <id>Q9BSH4</id>
    </interactant>
    <interactant intactId="EBI-948001">
        <id>Q15323</id>
        <label>KRT31</label>
    </interactant>
    <organismsDiffer>false</organismsDiffer>
    <experiments>3</experiments>
</comment>
<comment type="interaction">
    <interactant intactId="EBI-747797">
        <id>Q9BSH4</id>
    </interactant>
    <interactant intactId="EBI-1047093">
        <id>O76011</id>
        <label>KRT34</label>
    </interactant>
    <organismsDiffer>false</organismsDiffer>
    <experiments>3</experiments>
</comment>
<comment type="interaction">
    <interactant intactId="EBI-747797">
        <id>Q9BSH4</id>
    </interactant>
    <interactant intactId="EBI-10171697">
        <id>Q6A162</id>
        <label>KRT40</label>
    </interactant>
    <organismsDiffer>false</organismsDiffer>
    <experiments>3</experiments>
</comment>
<comment type="interaction">
    <interactant intactId="EBI-747797">
        <id>Q9BSH4</id>
    </interactant>
    <interactant intactId="EBI-739832">
        <id>Q8TBB1</id>
        <label>LNX1</label>
    </interactant>
    <organismsDiffer>false</organismsDiffer>
    <experiments>3</experiments>
</comment>
<comment type="interaction">
    <interactant intactId="EBI-747797">
        <id>Q9BSH4</id>
    </interactant>
    <interactant intactId="EBI-724076">
        <id>Q99750</id>
        <label>MDFI</label>
    </interactant>
    <organismsDiffer>false</organismsDiffer>
    <experiments>3</experiments>
</comment>
<comment type="interaction">
    <interactant intactId="EBI-747797">
        <id>Q9BSH4</id>
    </interactant>
    <interactant intactId="EBI-11522433">
        <id>Q5JR59-3</id>
        <label>MTUS2</label>
    </interactant>
    <organismsDiffer>false</organismsDiffer>
    <experiments>3</experiments>
</comment>
<comment type="interaction">
    <interactant intactId="EBI-747797">
        <id>Q9BSH4</id>
    </interactant>
    <interactant intactId="EBI-10293968">
        <id>Q96T49</id>
        <label>PPP1R16B</label>
    </interactant>
    <organismsDiffer>false</organismsDiffer>
    <experiments>3</experiments>
</comment>
<comment type="interaction">
    <interactant intactId="EBI-747797">
        <id>Q9BSH4</id>
    </interactant>
    <interactant intactId="EBI-726876">
        <id>Q6NUQ1</id>
        <label>RINT1</label>
    </interactant>
    <organismsDiffer>false</organismsDiffer>
    <experiments>3</experiments>
</comment>
<comment type="interaction">
    <interactant intactId="EBI-747797">
        <id>Q9BSH4</id>
    </interactant>
    <interactant intactId="EBI-711613">
        <id>P21673</id>
        <label>SAT1</label>
    </interactant>
    <organismsDiffer>false</organismsDiffer>
    <experiments>4</experiments>
</comment>
<comment type="interaction">
    <interactant intactId="EBI-747797">
        <id>Q9BSH4</id>
    </interactant>
    <interactant intactId="EBI-740098">
        <id>P36406</id>
        <label>TRIM23</label>
    </interactant>
    <organismsDiffer>false</organismsDiffer>
    <experiments>3</experiments>
</comment>
<comment type="interaction">
    <interactant intactId="EBI-747797">
        <id>Q9BSH4</id>
    </interactant>
    <interactant intactId="EBI-719493">
        <id>P14373</id>
        <label>TRIM27</label>
    </interactant>
    <organismsDiffer>false</organismsDiffer>
    <experiments>3</experiments>
</comment>
<comment type="subcellular location">
    <subcellularLocation>
        <location evidence="3">Mitochondrion</location>
    </subcellularLocation>
</comment>
<comment type="disease" evidence="3">
    <disease id="DI-05931">
        <name>Mitochondrial complex IV deficiency, nuclear type 8</name>
        <acronym>MC4DN8</acronym>
        <description>An autosomal recessive mitochondrial disorder characterized by slowly progressive cognitive dysfunction, dystonia or visual impairment that appear after an uneventful early childhood. Additional features include gait difficulties, spasticity, dysarthria, hypotonia, and variable intellectual disability. Brain imaging shows white matter abnormalities in the basal ganglia. Serum lactate levels are increased. Patient tissues show decreased levels and activity of mitochondrial respiratory complex IV.</description>
        <dbReference type="MIM" id="619052"/>
    </disease>
    <text>The disease is caused by variants affecting the gene represented in this entry.</text>
</comment>
<comment type="similarity">
    <text evidence="4">Belongs to the TACO1 family.</text>
</comment>
<feature type="chain" id="PRO_0000175942" description="Translational activator of cytochrome c oxidase 1">
    <location>
        <begin position="1"/>
        <end position="297"/>
    </location>
</feature>
<feature type="region of interest" description="Disordered" evidence="2">
    <location>
        <begin position="20"/>
        <end position="45"/>
    </location>
</feature>
<feature type="coiled-coil region" evidence="1">
    <location>
        <begin position="191"/>
        <end position="227"/>
    </location>
</feature>
<feature type="compositionally biased region" description="Basic and acidic residues" evidence="2">
    <location>
        <begin position="28"/>
        <end position="39"/>
    </location>
</feature>
<feature type="sequence variant" id="VAR_052934" description="In dbSNP:rs35252424.">
    <original>G</original>
    <variation>S</variation>
    <location>
        <position position="145"/>
    </location>
</feature>
<feature type="sequence conflict" description="In Ref. 5; AAF24044." evidence="4" ref="5">
    <original>L</original>
    <variation>M</variation>
    <location>
        <position position="168"/>
    </location>
</feature>